<comment type="function">
    <text evidence="1">Catalyzes the reversible isomerization of glucose-6-phosphate to fructose-6-phosphate.</text>
</comment>
<comment type="catalytic activity">
    <reaction evidence="1">
        <text>alpha-D-glucose 6-phosphate = beta-D-fructose 6-phosphate</text>
        <dbReference type="Rhea" id="RHEA:11816"/>
        <dbReference type="ChEBI" id="CHEBI:57634"/>
        <dbReference type="ChEBI" id="CHEBI:58225"/>
        <dbReference type="EC" id="5.3.1.9"/>
    </reaction>
</comment>
<comment type="pathway">
    <text evidence="1">Carbohydrate biosynthesis; gluconeogenesis.</text>
</comment>
<comment type="pathway">
    <text evidence="1">Carbohydrate degradation; glycolysis; D-glyceraldehyde 3-phosphate and glycerone phosphate from D-glucose: step 2/4.</text>
</comment>
<comment type="subcellular location">
    <subcellularLocation>
        <location evidence="1">Cytoplasm</location>
    </subcellularLocation>
</comment>
<comment type="similarity">
    <text evidence="1">Belongs to the GPI family.</text>
</comment>
<sequence length="430" mass="48990">MSSSYLKLDFKLKNQVVPFESYQKQVSQIHNAVKSKSVEEKDWLGWLNLASDYNKEEYAKMEEKVAQWLKDKVEVVVVIGIGGSYLGAKTGYEFIFGKYSIKKPQMELVFAGNDISAETLVAKLNYVKDKKFAINVISKSGTTLEPSIAFREFRNLLEQKEVNSWEYIVATTDKQKGVLFELATAKKYTKFVIPDDVGGRFSVLTAVGLFPFLCAGIDAKKVLEGARQMNKELFSENVMENAAYKYAVARHYLHKEKKYAVEIFVSYEPKLRYFAEWWKQLFAESEGKDGKGLWPSSAIFSTDLHSLGQMIQDGPKILFETVLTLENPAYDITFKDNVIDYDKLNYLSDKKLSEVNNVAFNATMEAHSDEGNVPNISMLFKDFSEETLGALFMFFMRAVTMSAYLLGVNPFNQPGVEVYKKNMFFLLGKK</sequence>
<keyword id="KW-0963">Cytoplasm</keyword>
<keyword id="KW-0312">Gluconeogenesis</keyword>
<keyword id="KW-0324">Glycolysis</keyword>
<keyword id="KW-0413">Isomerase</keyword>
<keyword id="KW-1185">Reference proteome</keyword>
<feature type="chain" id="PRO_0000180688" description="Glucose-6-phosphate isomerase">
    <location>
        <begin position="1"/>
        <end position="430"/>
    </location>
</feature>
<feature type="active site" description="Proton donor" evidence="1">
    <location>
        <position position="284"/>
    </location>
</feature>
<feature type="active site" evidence="1">
    <location>
        <position position="305"/>
    </location>
</feature>
<feature type="active site" evidence="1">
    <location>
        <position position="420"/>
    </location>
</feature>
<organism>
    <name type="scientific">Mycoplasmopsis synoviae (strain 53)</name>
    <name type="common">Mycoplasma synoviae</name>
    <dbReference type="NCBI Taxonomy" id="262723"/>
    <lineage>
        <taxon>Bacteria</taxon>
        <taxon>Bacillati</taxon>
        <taxon>Mycoplasmatota</taxon>
        <taxon>Mycoplasmoidales</taxon>
        <taxon>Metamycoplasmataceae</taxon>
        <taxon>Mycoplasmopsis</taxon>
    </lineage>
</organism>
<protein>
    <recommendedName>
        <fullName evidence="1">Glucose-6-phosphate isomerase</fullName>
        <shortName evidence="1">GPI</shortName>
        <ecNumber evidence="1">5.3.1.9</ecNumber>
    </recommendedName>
    <alternativeName>
        <fullName evidence="1">Phosphoglucose isomerase</fullName>
        <shortName evidence="1">PGI</shortName>
    </alternativeName>
    <alternativeName>
        <fullName evidence="1">Phosphohexose isomerase</fullName>
        <shortName evidence="1">PHI</shortName>
    </alternativeName>
</protein>
<name>G6PI_MYCS5</name>
<dbReference type="EC" id="5.3.1.9" evidence="1"/>
<dbReference type="EMBL" id="AE017245">
    <property type="protein sequence ID" value="AAZ43892.1"/>
    <property type="molecule type" value="Genomic_DNA"/>
</dbReference>
<dbReference type="RefSeq" id="WP_011283621.1">
    <property type="nucleotide sequence ID" value="NC_007294.1"/>
</dbReference>
<dbReference type="SMR" id="Q4A5S9"/>
<dbReference type="STRING" id="262723.MS53_0483"/>
<dbReference type="KEGG" id="msy:MS53_0483"/>
<dbReference type="eggNOG" id="COG0166">
    <property type="taxonomic scope" value="Bacteria"/>
</dbReference>
<dbReference type="HOGENOM" id="CLU_037303_0_1_14"/>
<dbReference type="OrthoDB" id="140919at2"/>
<dbReference type="UniPathway" id="UPA00109">
    <property type="reaction ID" value="UER00181"/>
</dbReference>
<dbReference type="UniPathway" id="UPA00138"/>
<dbReference type="Proteomes" id="UP000000549">
    <property type="component" value="Chromosome"/>
</dbReference>
<dbReference type="GO" id="GO:0005829">
    <property type="term" value="C:cytosol"/>
    <property type="evidence" value="ECO:0007669"/>
    <property type="project" value="TreeGrafter"/>
</dbReference>
<dbReference type="GO" id="GO:0097367">
    <property type="term" value="F:carbohydrate derivative binding"/>
    <property type="evidence" value="ECO:0007669"/>
    <property type="project" value="InterPro"/>
</dbReference>
<dbReference type="GO" id="GO:0004347">
    <property type="term" value="F:glucose-6-phosphate isomerase activity"/>
    <property type="evidence" value="ECO:0007669"/>
    <property type="project" value="UniProtKB-UniRule"/>
</dbReference>
<dbReference type="GO" id="GO:0048029">
    <property type="term" value="F:monosaccharide binding"/>
    <property type="evidence" value="ECO:0007669"/>
    <property type="project" value="TreeGrafter"/>
</dbReference>
<dbReference type="GO" id="GO:0006094">
    <property type="term" value="P:gluconeogenesis"/>
    <property type="evidence" value="ECO:0007669"/>
    <property type="project" value="UniProtKB-UniRule"/>
</dbReference>
<dbReference type="GO" id="GO:0051156">
    <property type="term" value="P:glucose 6-phosphate metabolic process"/>
    <property type="evidence" value="ECO:0007669"/>
    <property type="project" value="TreeGrafter"/>
</dbReference>
<dbReference type="GO" id="GO:0006096">
    <property type="term" value="P:glycolytic process"/>
    <property type="evidence" value="ECO:0007669"/>
    <property type="project" value="UniProtKB-UniRule"/>
</dbReference>
<dbReference type="CDD" id="cd05015">
    <property type="entry name" value="SIS_PGI_1"/>
    <property type="match status" value="1"/>
</dbReference>
<dbReference type="CDD" id="cd05016">
    <property type="entry name" value="SIS_PGI_2"/>
    <property type="match status" value="1"/>
</dbReference>
<dbReference type="FunFam" id="3.40.50.10490:FF:000016">
    <property type="entry name" value="Glucose-6-phosphate isomerase"/>
    <property type="match status" value="1"/>
</dbReference>
<dbReference type="Gene3D" id="3.40.50.10490">
    <property type="entry name" value="Glucose-6-phosphate isomerase like protein, domain 1"/>
    <property type="match status" value="2"/>
</dbReference>
<dbReference type="HAMAP" id="MF_00473">
    <property type="entry name" value="G6P_isomerase"/>
    <property type="match status" value="1"/>
</dbReference>
<dbReference type="InterPro" id="IPR001672">
    <property type="entry name" value="G6P_Isomerase"/>
</dbReference>
<dbReference type="InterPro" id="IPR018189">
    <property type="entry name" value="Phosphoglucose_isomerase_CS"/>
</dbReference>
<dbReference type="InterPro" id="IPR046348">
    <property type="entry name" value="SIS_dom_sf"/>
</dbReference>
<dbReference type="InterPro" id="IPR035476">
    <property type="entry name" value="SIS_PGI_1"/>
</dbReference>
<dbReference type="InterPro" id="IPR035482">
    <property type="entry name" value="SIS_PGI_2"/>
</dbReference>
<dbReference type="NCBIfam" id="NF010697">
    <property type="entry name" value="PRK14097.1"/>
    <property type="match status" value="1"/>
</dbReference>
<dbReference type="PANTHER" id="PTHR11469">
    <property type="entry name" value="GLUCOSE-6-PHOSPHATE ISOMERASE"/>
    <property type="match status" value="1"/>
</dbReference>
<dbReference type="PANTHER" id="PTHR11469:SF1">
    <property type="entry name" value="GLUCOSE-6-PHOSPHATE ISOMERASE"/>
    <property type="match status" value="1"/>
</dbReference>
<dbReference type="Pfam" id="PF00342">
    <property type="entry name" value="PGI"/>
    <property type="match status" value="1"/>
</dbReference>
<dbReference type="PRINTS" id="PR00662">
    <property type="entry name" value="G6PISOMERASE"/>
</dbReference>
<dbReference type="SUPFAM" id="SSF53697">
    <property type="entry name" value="SIS domain"/>
    <property type="match status" value="1"/>
</dbReference>
<dbReference type="PROSITE" id="PS00765">
    <property type="entry name" value="P_GLUCOSE_ISOMERASE_1"/>
    <property type="match status" value="1"/>
</dbReference>
<dbReference type="PROSITE" id="PS00174">
    <property type="entry name" value="P_GLUCOSE_ISOMERASE_2"/>
    <property type="match status" value="1"/>
</dbReference>
<dbReference type="PROSITE" id="PS51463">
    <property type="entry name" value="P_GLUCOSE_ISOMERASE_3"/>
    <property type="match status" value="1"/>
</dbReference>
<proteinExistence type="inferred from homology"/>
<reference key="1">
    <citation type="journal article" date="2005" name="J. Bacteriol.">
        <title>Swine and poultry pathogens: the complete genome sequences of two strains of Mycoplasma hyopneumoniae and a strain of Mycoplasma synoviae.</title>
        <authorList>
            <person name="Vasconcelos A.T.R."/>
            <person name="Ferreira H.B."/>
            <person name="Bizarro C.V."/>
            <person name="Bonatto S.L."/>
            <person name="Carvalho M.O."/>
            <person name="Pinto P.M."/>
            <person name="Almeida D.F."/>
            <person name="Almeida L.G.P."/>
            <person name="Almeida R."/>
            <person name="Alves-Junior L."/>
            <person name="Assuncao E.N."/>
            <person name="Azevedo V.A.C."/>
            <person name="Bogo M.R."/>
            <person name="Brigido M.M."/>
            <person name="Brocchi M."/>
            <person name="Burity H.A."/>
            <person name="Camargo A.A."/>
            <person name="Camargo S.S."/>
            <person name="Carepo M.S."/>
            <person name="Carraro D.M."/>
            <person name="de Mattos Cascardo J.C."/>
            <person name="Castro L.A."/>
            <person name="Cavalcanti G."/>
            <person name="Chemale G."/>
            <person name="Collevatti R.G."/>
            <person name="Cunha C.W."/>
            <person name="Dallagiovanna B."/>
            <person name="Dambros B.P."/>
            <person name="Dellagostin O.A."/>
            <person name="Falcao C."/>
            <person name="Fantinatti-Garboggini F."/>
            <person name="Felipe M.S.S."/>
            <person name="Fiorentin L."/>
            <person name="Franco G.R."/>
            <person name="Freitas N.S.A."/>
            <person name="Frias D."/>
            <person name="Grangeiro T.B."/>
            <person name="Grisard E.C."/>
            <person name="Guimaraes C.T."/>
            <person name="Hungria M."/>
            <person name="Jardim S.N."/>
            <person name="Krieger M.A."/>
            <person name="Laurino J.P."/>
            <person name="Lima L.F.A."/>
            <person name="Lopes M.I."/>
            <person name="Loreto E.L.S."/>
            <person name="Madeira H.M.F."/>
            <person name="Manfio G.P."/>
            <person name="Maranhao A.Q."/>
            <person name="Martinkovics C.T."/>
            <person name="Medeiros S.R.B."/>
            <person name="Moreira M.A.M."/>
            <person name="Neiva M."/>
            <person name="Ramalho-Neto C.E."/>
            <person name="Nicolas M.F."/>
            <person name="Oliveira S.C."/>
            <person name="Paixao R.F.C."/>
            <person name="Pedrosa F.O."/>
            <person name="Pena S.D.J."/>
            <person name="Pereira M."/>
            <person name="Pereira-Ferrari L."/>
            <person name="Piffer I."/>
            <person name="Pinto L.S."/>
            <person name="Potrich D.P."/>
            <person name="Salim A.C.M."/>
            <person name="Santos F.R."/>
            <person name="Schmitt R."/>
            <person name="Schneider M.P.C."/>
            <person name="Schrank A."/>
            <person name="Schrank I.S."/>
            <person name="Schuck A.F."/>
            <person name="Seuanez H.N."/>
            <person name="Silva D.W."/>
            <person name="Silva R."/>
            <person name="Silva S.C."/>
            <person name="Soares C.M.A."/>
            <person name="Souza K.R.L."/>
            <person name="Souza R.C."/>
            <person name="Staats C.C."/>
            <person name="Steffens M.B.R."/>
            <person name="Teixeira S.M.R."/>
            <person name="Urmenyi T.P."/>
            <person name="Vainstein M.H."/>
            <person name="Zuccherato L.W."/>
            <person name="Simpson A.J.G."/>
            <person name="Zaha A."/>
        </authorList>
    </citation>
    <scope>NUCLEOTIDE SEQUENCE [LARGE SCALE GENOMIC DNA]</scope>
    <source>
        <strain>53</strain>
    </source>
</reference>
<accession>Q4A5S9</accession>
<evidence type="ECO:0000255" key="1">
    <source>
        <dbReference type="HAMAP-Rule" id="MF_00473"/>
    </source>
</evidence>
<gene>
    <name evidence="1" type="primary">pgi</name>
    <name type="ordered locus">MS53_0483</name>
</gene>